<proteinExistence type="inferred from homology"/>
<organism>
    <name type="scientific">Chlamydia abortus (strain DSM 27085 / S26/3)</name>
    <name type="common">Chlamydophila abortus</name>
    <dbReference type="NCBI Taxonomy" id="218497"/>
    <lineage>
        <taxon>Bacteria</taxon>
        <taxon>Pseudomonadati</taxon>
        <taxon>Chlamydiota</taxon>
        <taxon>Chlamydiia</taxon>
        <taxon>Chlamydiales</taxon>
        <taxon>Chlamydiaceae</taxon>
        <taxon>Chlamydia/Chlamydophila group</taxon>
        <taxon>Chlamydia</taxon>
    </lineage>
</organism>
<keyword id="KW-0687">Ribonucleoprotein</keyword>
<keyword id="KW-0689">Ribosomal protein</keyword>
<keyword id="KW-0694">RNA-binding</keyword>
<keyword id="KW-0699">rRNA-binding</keyword>
<evidence type="ECO:0000255" key="1">
    <source>
        <dbReference type="HAMAP-Rule" id="MF_01310"/>
    </source>
</evidence>
<evidence type="ECO:0000305" key="2"/>
<reference key="1">
    <citation type="journal article" date="2005" name="Genome Res.">
        <title>The Chlamydophila abortus genome sequence reveals an array of variable proteins that contribute to interspecies variation.</title>
        <authorList>
            <person name="Thomson N.R."/>
            <person name="Yeats C."/>
            <person name="Bell K."/>
            <person name="Holden M.T.G."/>
            <person name="Bentley S.D."/>
            <person name="Livingstone M."/>
            <person name="Cerdeno-Tarraga A.-M."/>
            <person name="Harris B."/>
            <person name="Doggett J."/>
            <person name="Ormond D."/>
            <person name="Mungall K."/>
            <person name="Clarke K."/>
            <person name="Feltwell T."/>
            <person name="Hance Z."/>
            <person name="Sanders M."/>
            <person name="Quail M.A."/>
            <person name="Price C."/>
            <person name="Barrell B.G."/>
            <person name="Parkhill J."/>
            <person name="Longbottom D."/>
        </authorList>
    </citation>
    <scope>NUCLEOTIDE SEQUENCE [LARGE SCALE GENOMIC DNA]</scope>
    <source>
        <strain>DSM 27085 / S26/3</strain>
    </source>
</reference>
<gene>
    <name evidence="1" type="primary">rpsK</name>
    <name type="ordered locus">CAB112</name>
</gene>
<comment type="function">
    <text evidence="1">Located on the platform of the 30S subunit, it bridges several disparate RNA helices of the 16S rRNA. Forms part of the Shine-Dalgarno cleft in the 70S ribosome.</text>
</comment>
<comment type="subunit">
    <text evidence="1">Part of the 30S ribosomal subunit. Interacts with proteins S7 and S18. Binds to IF-3.</text>
</comment>
<comment type="similarity">
    <text evidence="1">Belongs to the universal ribosomal protein uS11 family.</text>
</comment>
<feature type="chain" id="PRO_0000230395" description="Small ribosomal subunit protein uS11">
    <location>
        <begin position="1"/>
        <end position="132"/>
    </location>
</feature>
<sequence length="132" mass="13902">MVKHQAQKKGVKRKQLKNIPSGIVHVKATFNNTIVSITDPAGNTISWASAGKVGYSGSRKSSAFAATVAAQDAAKIAMNSGLKEVEVCLKGTGAGRESAVRALIAAGLVVSVIRDETPVPHNGCRPRKRRRV</sequence>
<accession>Q5L700</accession>
<dbReference type="EMBL" id="CR848038">
    <property type="protein sequence ID" value="CAH63570.1"/>
    <property type="molecule type" value="Genomic_DNA"/>
</dbReference>
<dbReference type="RefSeq" id="WP_011096835.1">
    <property type="nucleotide sequence ID" value="NC_004552.2"/>
</dbReference>
<dbReference type="SMR" id="Q5L700"/>
<dbReference type="KEGG" id="cab:CAB112"/>
<dbReference type="eggNOG" id="COG0100">
    <property type="taxonomic scope" value="Bacteria"/>
</dbReference>
<dbReference type="HOGENOM" id="CLU_072439_5_0_0"/>
<dbReference type="OrthoDB" id="9806415at2"/>
<dbReference type="Proteomes" id="UP000001012">
    <property type="component" value="Chromosome"/>
</dbReference>
<dbReference type="GO" id="GO:1990904">
    <property type="term" value="C:ribonucleoprotein complex"/>
    <property type="evidence" value="ECO:0007669"/>
    <property type="project" value="UniProtKB-KW"/>
</dbReference>
<dbReference type="GO" id="GO:0005840">
    <property type="term" value="C:ribosome"/>
    <property type="evidence" value="ECO:0007669"/>
    <property type="project" value="UniProtKB-KW"/>
</dbReference>
<dbReference type="GO" id="GO:0019843">
    <property type="term" value="F:rRNA binding"/>
    <property type="evidence" value="ECO:0007669"/>
    <property type="project" value="UniProtKB-UniRule"/>
</dbReference>
<dbReference type="GO" id="GO:0003735">
    <property type="term" value="F:structural constituent of ribosome"/>
    <property type="evidence" value="ECO:0007669"/>
    <property type="project" value="InterPro"/>
</dbReference>
<dbReference type="GO" id="GO:0006412">
    <property type="term" value="P:translation"/>
    <property type="evidence" value="ECO:0007669"/>
    <property type="project" value="UniProtKB-UniRule"/>
</dbReference>
<dbReference type="FunFam" id="3.30.420.80:FF:000004">
    <property type="entry name" value="30S ribosomal protein S11"/>
    <property type="match status" value="1"/>
</dbReference>
<dbReference type="Gene3D" id="3.30.420.80">
    <property type="entry name" value="Ribosomal protein S11"/>
    <property type="match status" value="1"/>
</dbReference>
<dbReference type="HAMAP" id="MF_01310">
    <property type="entry name" value="Ribosomal_uS11"/>
    <property type="match status" value="1"/>
</dbReference>
<dbReference type="InterPro" id="IPR001971">
    <property type="entry name" value="Ribosomal_uS11"/>
</dbReference>
<dbReference type="InterPro" id="IPR019981">
    <property type="entry name" value="Ribosomal_uS11_bac-type"/>
</dbReference>
<dbReference type="InterPro" id="IPR018102">
    <property type="entry name" value="Ribosomal_uS11_CS"/>
</dbReference>
<dbReference type="InterPro" id="IPR036967">
    <property type="entry name" value="Ribosomal_uS11_sf"/>
</dbReference>
<dbReference type="NCBIfam" id="NF003698">
    <property type="entry name" value="PRK05309.1"/>
    <property type="match status" value="1"/>
</dbReference>
<dbReference type="NCBIfam" id="TIGR03632">
    <property type="entry name" value="uS11_bact"/>
    <property type="match status" value="1"/>
</dbReference>
<dbReference type="PANTHER" id="PTHR11759">
    <property type="entry name" value="40S RIBOSOMAL PROTEIN S14/30S RIBOSOMAL PROTEIN S11"/>
    <property type="match status" value="1"/>
</dbReference>
<dbReference type="Pfam" id="PF00411">
    <property type="entry name" value="Ribosomal_S11"/>
    <property type="match status" value="1"/>
</dbReference>
<dbReference type="PIRSF" id="PIRSF002131">
    <property type="entry name" value="Ribosomal_S11"/>
    <property type="match status" value="1"/>
</dbReference>
<dbReference type="SUPFAM" id="SSF53137">
    <property type="entry name" value="Translational machinery components"/>
    <property type="match status" value="1"/>
</dbReference>
<dbReference type="PROSITE" id="PS00054">
    <property type="entry name" value="RIBOSOMAL_S11"/>
    <property type="match status" value="1"/>
</dbReference>
<protein>
    <recommendedName>
        <fullName evidence="1">Small ribosomal subunit protein uS11</fullName>
    </recommendedName>
    <alternativeName>
        <fullName evidence="2">30S ribosomal protein S11</fullName>
    </alternativeName>
</protein>
<name>RS11_CHLAB</name>